<feature type="chain" id="PRO_1000017960" description="Aspartate--ammonia ligase">
    <location>
        <begin position="1"/>
        <end position="330"/>
    </location>
</feature>
<reference key="1">
    <citation type="journal article" date="2005" name="Nucleic Acids Res.">
        <title>Genome dynamics and diversity of Shigella species, the etiologic agents of bacillary dysentery.</title>
        <authorList>
            <person name="Yang F."/>
            <person name="Yang J."/>
            <person name="Zhang X."/>
            <person name="Chen L."/>
            <person name="Jiang Y."/>
            <person name="Yan Y."/>
            <person name="Tang X."/>
            <person name="Wang J."/>
            <person name="Xiong Z."/>
            <person name="Dong J."/>
            <person name="Xue Y."/>
            <person name="Zhu Y."/>
            <person name="Xu X."/>
            <person name="Sun L."/>
            <person name="Chen S."/>
            <person name="Nie H."/>
            <person name="Peng J."/>
            <person name="Xu J."/>
            <person name="Wang Y."/>
            <person name="Yuan Z."/>
            <person name="Wen Y."/>
            <person name="Yao Z."/>
            <person name="Shen Y."/>
            <person name="Qiang B."/>
            <person name="Hou Y."/>
            <person name="Yu J."/>
            <person name="Jin Q."/>
        </authorList>
    </citation>
    <scope>NUCLEOTIDE SEQUENCE [LARGE SCALE GENOMIC DNA]</scope>
    <source>
        <strain>Sd197</strain>
    </source>
</reference>
<proteinExistence type="inferred from homology"/>
<comment type="catalytic activity">
    <reaction evidence="1">
        <text>L-aspartate + NH4(+) + ATP = L-asparagine + AMP + diphosphate + H(+)</text>
        <dbReference type="Rhea" id="RHEA:11372"/>
        <dbReference type="ChEBI" id="CHEBI:15378"/>
        <dbReference type="ChEBI" id="CHEBI:28938"/>
        <dbReference type="ChEBI" id="CHEBI:29991"/>
        <dbReference type="ChEBI" id="CHEBI:30616"/>
        <dbReference type="ChEBI" id="CHEBI:33019"/>
        <dbReference type="ChEBI" id="CHEBI:58048"/>
        <dbReference type="ChEBI" id="CHEBI:456215"/>
        <dbReference type="EC" id="6.3.1.1"/>
    </reaction>
</comment>
<comment type="pathway">
    <text evidence="1">Amino-acid biosynthesis; L-asparagine biosynthesis; L-asparagine from L-aspartate (ammonia route): step 1/1.</text>
</comment>
<comment type="subcellular location">
    <subcellularLocation>
        <location evidence="1">Cytoplasm</location>
    </subcellularLocation>
</comment>
<comment type="similarity">
    <text evidence="1">Belongs to the class-II aminoacyl-tRNA synthetase family. AsnA subfamily.</text>
</comment>
<accession>Q329T3</accession>
<evidence type="ECO:0000255" key="1">
    <source>
        <dbReference type="HAMAP-Rule" id="MF_00555"/>
    </source>
</evidence>
<protein>
    <recommendedName>
        <fullName evidence="1">Aspartate--ammonia ligase</fullName>
        <ecNumber evidence="1">6.3.1.1</ecNumber>
    </recommendedName>
    <alternativeName>
        <fullName evidence="1">Asparagine synthetase A</fullName>
    </alternativeName>
</protein>
<keyword id="KW-0028">Amino-acid biosynthesis</keyword>
<keyword id="KW-0061">Asparagine biosynthesis</keyword>
<keyword id="KW-0067">ATP-binding</keyword>
<keyword id="KW-0963">Cytoplasm</keyword>
<keyword id="KW-0436">Ligase</keyword>
<keyword id="KW-0547">Nucleotide-binding</keyword>
<keyword id="KW-1185">Reference proteome</keyword>
<organism>
    <name type="scientific">Shigella dysenteriae serotype 1 (strain Sd197)</name>
    <dbReference type="NCBI Taxonomy" id="300267"/>
    <lineage>
        <taxon>Bacteria</taxon>
        <taxon>Pseudomonadati</taxon>
        <taxon>Pseudomonadota</taxon>
        <taxon>Gammaproteobacteria</taxon>
        <taxon>Enterobacterales</taxon>
        <taxon>Enterobacteriaceae</taxon>
        <taxon>Shigella</taxon>
    </lineage>
</organism>
<name>ASNA_SHIDS</name>
<dbReference type="EC" id="6.3.1.1" evidence="1"/>
<dbReference type="EMBL" id="CP000034">
    <property type="protein sequence ID" value="ABB63922.1"/>
    <property type="molecule type" value="Genomic_DNA"/>
</dbReference>
<dbReference type="RefSeq" id="WP_000845107.1">
    <property type="nucleotide sequence ID" value="NC_007606.1"/>
</dbReference>
<dbReference type="RefSeq" id="YP_405413.1">
    <property type="nucleotide sequence ID" value="NC_007606.1"/>
</dbReference>
<dbReference type="SMR" id="Q329T3"/>
<dbReference type="STRING" id="300267.SDY_4004"/>
<dbReference type="EnsemblBacteria" id="ABB63922">
    <property type="protein sequence ID" value="ABB63922"/>
    <property type="gene ID" value="SDY_4004"/>
</dbReference>
<dbReference type="GeneID" id="75173978"/>
<dbReference type="KEGG" id="sdy:SDY_4004"/>
<dbReference type="PATRIC" id="fig|300267.13.peg.4716"/>
<dbReference type="HOGENOM" id="CLU_071543_0_0_6"/>
<dbReference type="UniPathway" id="UPA00134">
    <property type="reaction ID" value="UER00194"/>
</dbReference>
<dbReference type="Proteomes" id="UP000002716">
    <property type="component" value="Chromosome"/>
</dbReference>
<dbReference type="GO" id="GO:0005829">
    <property type="term" value="C:cytosol"/>
    <property type="evidence" value="ECO:0007669"/>
    <property type="project" value="TreeGrafter"/>
</dbReference>
<dbReference type="GO" id="GO:0004071">
    <property type="term" value="F:aspartate-ammonia ligase activity"/>
    <property type="evidence" value="ECO:0007669"/>
    <property type="project" value="UniProtKB-UniRule"/>
</dbReference>
<dbReference type="GO" id="GO:0005524">
    <property type="term" value="F:ATP binding"/>
    <property type="evidence" value="ECO:0007669"/>
    <property type="project" value="UniProtKB-UniRule"/>
</dbReference>
<dbReference type="GO" id="GO:0070981">
    <property type="term" value="P:L-asparagine biosynthetic process"/>
    <property type="evidence" value="ECO:0007669"/>
    <property type="project" value="UniProtKB-UniRule"/>
</dbReference>
<dbReference type="CDD" id="cd00645">
    <property type="entry name" value="AsnA"/>
    <property type="match status" value="1"/>
</dbReference>
<dbReference type="FunFam" id="3.30.930.10:FF:000025">
    <property type="entry name" value="Aspartate--ammonia ligase"/>
    <property type="match status" value="1"/>
</dbReference>
<dbReference type="Gene3D" id="3.30.930.10">
    <property type="entry name" value="Bira Bifunctional Protein, Domain 2"/>
    <property type="match status" value="1"/>
</dbReference>
<dbReference type="HAMAP" id="MF_00555">
    <property type="entry name" value="AsnA"/>
    <property type="match status" value="1"/>
</dbReference>
<dbReference type="InterPro" id="IPR006195">
    <property type="entry name" value="aa-tRNA-synth_II"/>
</dbReference>
<dbReference type="InterPro" id="IPR045864">
    <property type="entry name" value="aa-tRNA-synth_II/BPL/LPL"/>
</dbReference>
<dbReference type="InterPro" id="IPR004618">
    <property type="entry name" value="AsnA"/>
</dbReference>
<dbReference type="NCBIfam" id="TIGR00669">
    <property type="entry name" value="asnA"/>
    <property type="match status" value="1"/>
</dbReference>
<dbReference type="PANTHER" id="PTHR30073">
    <property type="entry name" value="ASPARTATE--AMMONIA LIGASE"/>
    <property type="match status" value="1"/>
</dbReference>
<dbReference type="PANTHER" id="PTHR30073:SF5">
    <property type="entry name" value="ASPARTATE--AMMONIA LIGASE"/>
    <property type="match status" value="1"/>
</dbReference>
<dbReference type="Pfam" id="PF03590">
    <property type="entry name" value="AsnA"/>
    <property type="match status" value="1"/>
</dbReference>
<dbReference type="PIRSF" id="PIRSF001555">
    <property type="entry name" value="Asp_ammon_ligase"/>
    <property type="match status" value="1"/>
</dbReference>
<dbReference type="SUPFAM" id="SSF55681">
    <property type="entry name" value="Class II aaRS and biotin synthetases"/>
    <property type="match status" value="1"/>
</dbReference>
<dbReference type="PROSITE" id="PS50862">
    <property type="entry name" value="AA_TRNA_LIGASE_II"/>
    <property type="match status" value="1"/>
</dbReference>
<sequence>MKTAYIAKQRQISFVKSHFSRQLEERLGLIEVQAPILSRVGDGTQDNLSGCEKAVQVKVKALPDAQFEVVHSLAKWKRQTLGQHDFSAGEGLYTHMKALRPDEDRLSPLHSVYVDQWDWERVMGDGERQFSTLKSTVEAIWAGIKATEAAVSEEFGLAPFLPDQIHFVHSQELLSRYPDLDAKGRERAIAKDLGAVFLVGIGGKLSDGHRHDVRAPDYDDWSTPSELGHAGLNGDILVWNPVLEDAFELSSMGIRVDADTLKHQLALTGDEDRLQLEWHQALLRGEMPQTIGGGIGQSRLTMLLLQLPHIGQVQCGVWPAAVRESVPSLL</sequence>
<gene>
    <name evidence="1" type="primary">asnA</name>
    <name type="ordered locus">SDY_4004</name>
</gene>